<feature type="chain" id="PRO_0000061750" description="Cytochrome b">
    <location>
        <begin position="1"/>
        <end position="386"/>
    </location>
</feature>
<feature type="transmembrane region" description="Helical" evidence="3">
    <location>
        <begin position="32"/>
        <end position="52"/>
    </location>
</feature>
<feature type="transmembrane region" description="Helical" evidence="3">
    <location>
        <begin position="76"/>
        <end position="98"/>
    </location>
</feature>
<feature type="transmembrane region" description="Helical" evidence="3">
    <location>
        <begin position="113"/>
        <end position="133"/>
    </location>
</feature>
<feature type="transmembrane region" description="Helical" evidence="3">
    <location>
        <begin position="179"/>
        <end position="199"/>
    </location>
</feature>
<feature type="transmembrane region" description="Helical" evidence="3">
    <location>
        <begin position="226"/>
        <end position="246"/>
    </location>
</feature>
<feature type="transmembrane region" description="Helical" evidence="3">
    <location>
        <begin position="290"/>
        <end position="310"/>
    </location>
</feature>
<feature type="transmembrane region" description="Helical" evidence="3">
    <location>
        <begin position="322"/>
        <end position="342"/>
    </location>
</feature>
<feature type="transmembrane region" description="Helical" evidence="3">
    <location>
        <begin position="349"/>
        <end position="369"/>
    </location>
</feature>
<feature type="binding site" description="axial binding residue" evidence="5">
    <location>
        <position position="82"/>
    </location>
    <ligand>
        <name>heme b</name>
        <dbReference type="ChEBI" id="CHEBI:60344"/>
        <label>b562</label>
    </ligand>
    <ligandPart>
        <name>Fe</name>
        <dbReference type="ChEBI" id="CHEBI:18248"/>
    </ligandPart>
</feature>
<feature type="binding site" description="axial binding residue" evidence="5">
    <location>
        <position position="96"/>
    </location>
    <ligand>
        <name>heme b</name>
        <dbReference type="ChEBI" id="CHEBI:60344"/>
        <label>b566</label>
    </ligand>
    <ligandPart>
        <name>Fe</name>
        <dbReference type="ChEBI" id="CHEBI:18248"/>
    </ligandPart>
</feature>
<feature type="binding site" description="axial binding residue" evidence="5">
    <location>
        <position position="183"/>
    </location>
    <ligand>
        <name>heme b</name>
        <dbReference type="ChEBI" id="CHEBI:60344"/>
        <label>b562</label>
    </ligand>
    <ligandPart>
        <name>Fe</name>
        <dbReference type="ChEBI" id="CHEBI:18248"/>
    </ligandPart>
</feature>
<feature type="binding site" description="axial binding residue" evidence="5">
    <location>
        <position position="197"/>
    </location>
    <ligand>
        <name>heme b</name>
        <dbReference type="ChEBI" id="CHEBI:60344"/>
        <label>b566</label>
    </ligand>
    <ligandPart>
        <name>Fe</name>
        <dbReference type="ChEBI" id="CHEBI:18248"/>
    </ligandPart>
</feature>
<feature type="binding site" evidence="2">
    <location>
        <position position="202"/>
    </location>
    <ligand>
        <name>a ubiquinone</name>
        <dbReference type="ChEBI" id="CHEBI:16389"/>
    </ligand>
</feature>
<evidence type="ECO:0000250" key="1"/>
<evidence type="ECO:0000250" key="2">
    <source>
        <dbReference type="UniProtKB" id="P00157"/>
    </source>
</evidence>
<evidence type="ECO:0000250" key="3">
    <source>
        <dbReference type="UniProtKB" id="P00163"/>
    </source>
</evidence>
<evidence type="ECO:0000255" key="4">
    <source>
        <dbReference type="PROSITE-ProRule" id="PRU00967"/>
    </source>
</evidence>
<evidence type="ECO:0000255" key="5">
    <source>
        <dbReference type="PROSITE-ProRule" id="PRU00968"/>
    </source>
</evidence>
<gene>
    <name type="primary">cob</name>
    <name type="synonym">cytB</name>
</gene>
<proteinExistence type="inferred from homology"/>
<reference key="1">
    <citation type="journal article" date="2003" name="FEBS Lett.">
        <title>The mitochondrial genome of the thermal dimorphic fungus Penicillium marneffei is more closely related to those of molds than yeasts.</title>
        <authorList>
            <person name="Woo P.C.Y."/>
            <person name="Zhen H."/>
            <person name="Cai J.J."/>
            <person name="Yu J."/>
            <person name="Lau S.K.P."/>
            <person name="Wang J."/>
            <person name="Teng J.L.L."/>
            <person name="Wong S.S.Y."/>
            <person name="Tse R.H."/>
            <person name="Chen R."/>
            <person name="Yang H."/>
            <person name="Liu B."/>
            <person name="Yuen K.-Y."/>
        </authorList>
    </citation>
    <scope>NUCLEOTIDE SEQUENCE [LARGE SCALE GENOMIC DNA]</scope>
    <source>
        <strain>MP1</strain>
    </source>
</reference>
<comment type="function">
    <text evidence="3">Component of the ubiquinol-cytochrome c reductase complex (complex III or cytochrome b-c1 complex) that is part of the mitochondrial respiratory chain. The b-c1 complex mediates electron transfer from ubiquinol to cytochrome c. Contributes to the generation of a proton gradient across the mitochondrial membrane that is then used for ATP synthesis.</text>
</comment>
<comment type="cofactor">
    <cofactor evidence="3">
        <name>heme b</name>
        <dbReference type="ChEBI" id="CHEBI:60344"/>
    </cofactor>
    <text evidence="3">Binds 2 heme b groups non-covalently.</text>
</comment>
<comment type="subunit">
    <text evidence="3">Fungal cytochrome b-c1 complex contains 10 subunits; 3 respiratory subunits, 2 core proteins and 5 low-molecular weight proteins. Cytochrome b-c1 complex is a homodimer.</text>
</comment>
<comment type="subcellular location">
    <subcellularLocation>
        <location evidence="3">Mitochondrion inner membrane</location>
        <topology evidence="3">Multi-pass membrane protein</topology>
    </subcellularLocation>
</comment>
<comment type="miscellaneous">
    <text evidence="1">Heme 1 (or BL or b562) is low-potential and absorbs at about 562 nm, and heme 2 (or BH or b566) is high-potential and absorbs at about 566 nm.</text>
</comment>
<comment type="similarity">
    <text evidence="4 5">Belongs to the cytochrome b family.</text>
</comment>
<comment type="caution">
    <text evidence="3">The protein contains only eight transmembrane helices, not nine as predicted by bioinformatics tools.</text>
</comment>
<name>CYB_TALMA</name>
<geneLocation type="mitochondrion"/>
<sequence>MRIFKSHPLLRLVNSYVIDSPTPSNLSYLWNFGSLLALCLIIQIVTGVTLAMHYTPSVAEAFNSVEHIMRDVNNGWLIRYLHANTASAFFFLVYLHVGRGIYYGSYKAPRTLTWIIGSIILIVMMATAFLGYVLPYGQMSLWGATVITNLMSAIPWIGQDIVEFLWGGFSVNNATLNRFFALHFVLPFVLAALVIMHLISYHETVGSGNPLGISSNYDRLPFAPYYIFKDLITIFLFFFVLSLFVFFMPNALGDSENYVMANPMQTPPAIVPEWYLLPFYAILRSIPNKLLGVIAMFSAILIILVMPITDLSKYRGLQFRPLSKVAFYVFVANFLILMQLGAKHVESPFIEFGQISTVLYFSHFLVIMPLVSFIENTLVELITKKS</sequence>
<protein>
    <recommendedName>
        <fullName>Cytochrome b</fullName>
    </recommendedName>
    <alternativeName>
        <fullName>Complex III subunit 3</fullName>
    </alternativeName>
    <alternativeName>
        <fullName>Complex III subunit III</fullName>
    </alternativeName>
    <alternativeName>
        <fullName>Cytochrome b-c1 complex subunit 3</fullName>
    </alternativeName>
    <alternativeName>
        <fullName>Ubiquinol-cytochrome-c reductase complex cytochrome b subunit</fullName>
    </alternativeName>
</protein>
<accession>Q6V9D6</accession>
<organism>
    <name type="scientific">Talaromyces marneffei</name>
    <name type="common">Penicillium marneffei</name>
    <dbReference type="NCBI Taxonomy" id="37727"/>
    <lineage>
        <taxon>Eukaryota</taxon>
        <taxon>Fungi</taxon>
        <taxon>Dikarya</taxon>
        <taxon>Ascomycota</taxon>
        <taxon>Pezizomycotina</taxon>
        <taxon>Eurotiomycetes</taxon>
        <taxon>Eurotiomycetidae</taxon>
        <taxon>Eurotiales</taxon>
        <taxon>Trichocomaceae</taxon>
        <taxon>Talaromyces</taxon>
        <taxon>Talaromyces sect. Talaromyces</taxon>
    </lineage>
</organism>
<keyword id="KW-0249">Electron transport</keyword>
<keyword id="KW-0349">Heme</keyword>
<keyword id="KW-0408">Iron</keyword>
<keyword id="KW-0472">Membrane</keyword>
<keyword id="KW-0479">Metal-binding</keyword>
<keyword id="KW-0496">Mitochondrion</keyword>
<keyword id="KW-0999">Mitochondrion inner membrane</keyword>
<keyword id="KW-0679">Respiratory chain</keyword>
<keyword id="KW-0812">Transmembrane</keyword>
<keyword id="KW-1133">Transmembrane helix</keyword>
<keyword id="KW-0813">Transport</keyword>
<keyword id="KW-0830">Ubiquinone</keyword>
<dbReference type="EMBL" id="AY347307">
    <property type="protein sequence ID" value="AAQ54914.1"/>
    <property type="molecule type" value="Genomic_DNA"/>
</dbReference>
<dbReference type="RefSeq" id="NP_943713.1">
    <property type="nucleotide sequence ID" value="NC_005256.1"/>
</dbReference>
<dbReference type="SMR" id="Q6V9D6"/>
<dbReference type="GeneID" id="2657834"/>
<dbReference type="VEuPathDB" id="FungiDB:PMAA_m0010"/>
<dbReference type="GO" id="GO:0005743">
    <property type="term" value="C:mitochondrial inner membrane"/>
    <property type="evidence" value="ECO:0007669"/>
    <property type="project" value="UniProtKB-SubCell"/>
</dbReference>
<dbReference type="GO" id="GO:0045275">
    <property type="term" value="C:respiratory chain complex III"/>
    <property type="evidence" value="ECO:0007669"/>
    <property type="project" value="InterPro"/>
</dbReference>
<dbReference type="GO" id="GO:0046872">
    <property type="term" value="F:metal ion binding"/>
    <property type="evidence" value="ECO:0007669"/>
    <property type="project" value="UniProtKB-KW"/>
</dbReference>
<dbReference type="GO" id="GO:0008121">
    <property type="term" value="F:ubiquinol-cytochrome-c reductase activity"/>
    <property type="evidence" value="ECO:0007669"/>
    <property type="project" value="InterPro"/>
</dbReference>
<dbReference type="GO" id="GO:0006122">
    <property type="term" value="P:mitochondrial electron transport, ubiquinol to cytochrome c"/>
    <property type="evidence" value="ECO:0007669"/>
    <property type="project" value="TreeGrafter"/>
</dbReference>
<dbReference type="CDD" id="cd00290">
    <property type="entry name" value="cytochrome_b_C"/>
    <property type="match status" value="1"/>
</dbReference>
<dbReference type="CDD" id="cd00284">
    <property type="entry name" value="Cytochrome_b_N"/>
    <property type="match status" value="1"/>
</dbReference>
<dbReference type="FunFam" id="1.20.810.10:FF:000002">
    <property type="entry name" value="Cytochrome b"/>
    <property type="match status" value="1"/>
</dbReference>
<dbReference type="Gene3D" id="1.20.810.10">
    <property type="entry name" value="Cytochrome Bc1 Complex, Chain C"/>
    <property type="match status" value="1"/>
</dbReference>
<dbReference type="InterPro" id="IPR005798">
    <property type="entry name" value="Cyt_b/b6_C"/>
</dbReference>
<dbReference type="InterPro" id="IPR036150">
    <property type="entry name" value="Cyt_b/b6_C_sf"/>
</dbReference>
<dbReference type="InterPro" id="IPR005797">
    <property type="entry name" value="Cyt_b/b6_N"/>
</dbReference>
<dbReference type="InterPro" id="IPR027387">
    <property type="entry name" value="Cytb/b6-like_sf"/>
</dbReference>
<dbReference type="InterPro" id="IPR030689">
    <property type="entry name" value="Cytochrome_b"/>
</dbReference>
<dbReference type="InterPro" id="IPR048260">
    <property type="entry name" value="Cytochrome_b_C_euk/bac"/>
</dbReference>
<dbReference type="InterPro" id="IPR048259">
    <property type="entry name" value="Cytochrome_b_N_euk/bac"/>
</dbReference>
<dbReference type="InterPro" id="IPR016174">
    <property type="entry name" value="Di-haem_cyt_TM"/>
</dbReference>
<dbReference type="PANTHER" id="PTHR19271">
    <property type="entry name" value="CYTOCHROME B"/>
    <property type="match status" value="1"/>
</dbReference>
<dbReference type="PANTHER" id="PTHR19271:SF16">
    <property type="entry name" value="CYTOCHROME B"/>
    <property type="match status" value="1"/>
</dbReference>
<dbReference type="Pfam" id="PF00032">
    <property type="entry name" value="Cytochrom_B_C"/>
    <property type="match status" value="1"/>
</dbReference>
<dbReference type="Pfam" id="PF00033">
    <property type="entry name" value="Cytochrome_B"/>
    <property type="match status" value="1"/>
</dbReference>
<dbReference type="PIRSF" id="PIRSF038885">
    <property type="entry name" value="COB"/>
    <property type="match status" value="1"/>
</dbReference>
<dbReference type="SUPFAM" id="SSF81648">
    <property type="entry name" value="a domain/subunit of cytochrome bc1 complex (Ubiquinol-cytochrome c reductase)"/>
    <property type="match status" value="1"/>
</dbReference>
<dbReference type="SUPFAM" id="SSF81342">
    <property type="entry name" value="Transmembrane di-heme cytochromes"/>
    <property type="match status" value="1"/>
</dbReference>
<dbReference type="PROSITE" id="PS51003">
    <property type="entry name" value="CYTB_CTER"/>
    <property type="match status" value="1"/>
</dbReference>
<dbReference type="PROSITE" id="PS51002">
    <property type="entry name" value="CYTB_NTER"/>
    <property type="match status" value="1"/>
</dbReference>